<comment type="function">
    <text>Probable ion channel inhibitor.</text>
</comment>
<comment type="subcellular location">
    <subcellularLocation>
        <location evidence="1">Secreted</location>
    </subcellularLocation>
</comment>
<comment type="tissue specificity">
    <text>Expressed by the venom gland.</text>
</comment>
<comment type="domain">
    <text evidence="1">The presence of a 'disulfide through disulfide knot' structurally defines this protein as a knottin.</text>
</comment>
<comment type="similarity">
    <text evidence="4">Belongs to the neurotoxin 10 (Hwtx-1) family. 29 (Jztx-13) subfamily.</text>
</comment>
<sequence>MKTSVLFVIFGLALLLCLSFAAELEDTGRQCGEFMWKCGAGKPTCCSGYDCSPTWKWCVLKSPGRR</sequence>
<feature type="signal peptide" evidence="2">
    <location>
        <begin position="1"/>
        <end position="21"/>
    </location>
</feature>
<feature type="propeptide" id="PRO_0000398421" evidence="1">
    <location>
        <begin position="22"/>
        <end position="29"/>
    </location>
</feature>
<feature type="peptide" id="PRO_0000398422" description="U10-theraphotoxin-Cg1a 2">
    <location>
        <begin position="30"/>
        <end position="66"/>
    </location>
</feature>
<feature type="disulfide bond" evidence="1">
    <location>
        <begin position="31"/>
        <end position="46"/>
    </location>
</feature>
<feature type="disulfide bond" evidence="1">
    <location>
        <begin position="38"/>
        <end position="51"/>
    </location>
</feature>
<feature type="disulfide bond" evidence="1">
    <location>
        <begin position="45"/>
        <end position="58"/>
    </location>
</feature>
<organism>
    <name type="scientific">Chilobrachys guangxiensis</name>
    <name type="common">Chinese earth tiger tarantula</name>
    <name type="synonym">Chilobrachys jingzhao</name>
    <dbReference type="NCBI Taxonomy" id="278060"/>
    <lineage>
        <taxon>Eukaryota</taxon>
        <taxon>Metazoa</taxon>
        <taxon>Ecdysozoa</taxon>
        <taxon>Arthropoda</taxon>
        <taxon>Chelicerata</taxon>
        <taxon>Arachnida</taxon>
        <taxon>Araneae</taxon>
        <taxon>Mygalomorphae</taxon>
        <taxon>Theraphosidae</taxon>
        <taxon>Chilobrachys</taxon>
    </lineage>
</organism>
<accession>B1P1D0</accession>
<proteinExistence type="evidence at protein level"/>
<dbReference type="EMBL" id="EU233861">
    <property type="protein sequence ID" value="ABY71680.1"/>
    <property type="molecule type" value="mRNA"/>
</dbReference>
<dbReference type="SMR" id="B1P1D0"/>
<dbReference type="ArachnoServer" id="AS000807">
    <property type="toxin name" value="U10-theraphotoxin-Cg1a"/>
</dbReference>
<dbReference type="GO" id="GO:0005576">
    <property type="term" value="C:extracellular region"/>
    <property type="evidence" value="ECO:0007669"/>
    <property type="project" value="UniProtKB-SubCell"/>
</dbReference>
<dbReference type="GO" id="GO:0008200">
    <property type="term" value="F:ion channel inhibitor activity"/>
    <property type="evidence" value="ECO:0007669"/>
    <property type="project" value="InterPro"/>
</dbReference>
<dbReference type="GO" id="GO:0090729">
    <property type="term" value="F:toxin activity"/>
    <property type="evidence" value="ECO:0007669"/>
    <property type="project" value="UniProtKB-KW"/>
</dbReference>
<dbReference type="InterPro" id="IPR011696">
    <property type="entry name" value="Huwentoxin-1"/>
</dbReference>
<dbReference type="InterPro" id="IPR013140">
    <property type="entry name" value="Huwentoxin_CS1"/>
</dbReference>
<dbReference type="Pfam" id="PF07740">
    <property type="entry name" value="Toxin_12"/>
    <property type="match status" value="1"/>
</dbReference>
<dbReference type="SUPFAM" id="SSF57059">
    <property type="entry name" value="omega toxin-like"/>
    <property type="match status" value="1"/>
</dbReference>
<dbReference type="PROSITE" id="PS60021">
    <property type="entry name" value="HWTX_1"/>
    <property type="match status" value="1"/>
</dbReference>
<name>JZ13B_CHIGU</name>
<keyword id="KW-0903">Direct protein sequencing</keyword>
<keyword id="KW-1015">Disulfide bond</keyword>
<keyword id="KW-0872">Ion channel impairing toxin</keyword>
<keyword id="KW-0960">Knottin</keyword>
<keyword id="KW-0964">Secreted</keyword>
<keyword id="KW-0732">Signal</keyword>
<keyword id="KW-0800">Toxin</keyword>
<protein>
    <recommendedName>
        <fullName>U10-theraphotoxin-Cg1a 2</fullName>
        <shortName>U10-TRTX-Cg1a</shortName>
    </recommendedName>
    <alternativeName>
        <fullName evidence="5">Jingzhaotoxin-13.2</fullName>
        <shortName evidence="5">JZTX-13.2</shortName>
    </alternativeName>
    <alternativeName>
        <fullName evidence="3">Peptide F5-18.88</fullName>
    </alternativeName>
</protein>
<evidence type="ECO:0000250" key="1"/>
<evidence type="ECO:0000255" key="2"/>
<evidence type="ECO:0000303" key="3">
    <source>
    </source>
</evidence>
<evidence type="ECO:0000305" key="4"/>
<evidence type="ECO:0000312" key="5">
    <source>
        <dbReference type="EMBL" id="ABY71680.1"/>
    </source>
</evidence>
<reference key="1">
    <citation type="journal article" date="2008" name="Cell. Mol. Life Sci.">
        <title>Molecular diversity and evolution of cystine knot toxins of the tarantula Chilobrachys jingzhao.</title>
        <authorList>
            <person name="Chen J."/>
            <person name="Deng M."/>
            <person name="He Q."/>
            <person name="Meng E."/>
            <person name="Jiang L."/>
            <person name="Liao Z."/>
            <person name="Rong M."/>
            <person name="Liang S."/>
        </authorList>
    </citation>
    <scope>NUCLEOTIDE SEQUENCE [LARGE SCALE MRNA]</scope>
    <source>
        <tissue>Venom gland</tissue>
    </source>
</reference>
<reference key="2">
    <citation type="journal article" date="2007" name="Proteomics">
        <title>Proteomic and peptidomic analysis of the venom from Chinese tarantula Chilobrachys jingzhao.</title>
        <authorList>
            <person name="Liao Z."/>
            <person name="Cao J."/>
            <person name="Li S."/>
            <person name="Yan X."/>
            <person name="Hu W."/>
            <person name="He Q."/>
            <person name="Chen J."/>
            <person name="Tang J."/>
            <person name="Xie J."/>
            <person name="Liang S."/>
        </authorList>
    </citation>
    <scope>PROTEIN SEQUENCE OF 30-41</scope>
    <scope>IDENTIFICATION BY MASS SPECTROMETRY</scope>
    <source>
        <tissue>Venom</tissue>
    </source>
</reference>